<accession>C4K1L3</accession>
<reference key="1">
    <citation type="journal article" date="2009" name="PLoS ONE">
        <title>Genome sequence of the endosymbiont Rickettsia peacockii and comparison with virulent Rickettsia rickettsii: identification of virulence factors.</title>
        <authorList>
            <person name="Felsheim R.F."/>
            <person name="Kurtti T.J."/>
            <person name="Munderloh U.G."/>
        </authorList>
    </citation>
    <scope>NUCLEOTIDE SEQUENCE [LARGE SCALE GENOMIC DNA]</scope>
    <source>
        <strain>Rustic</strain>
    </source>
</reference>
<comment type="function">
    <text evidence="1">This is one of the proteins that binds to the 5S RNA in the ribosome where it forms part of the central protuberance.</text>
</comment>
<comment type="subunit">
    <text evidence="1">Part of the 50S ribosomal subunit; part of the 5S rRNA/L5/L18/L25 subcomplex. Contacts the 5S rRNA. Binds to the 5S rRNA independently of L5 and L18.</text>
</comment>
<comment type="similarity">
    <text evidence="1">Belongs to the bacterial ribosomal protein bL25 family. CTC subfamily.</text>
</comment>
<organism>
    <name type="scientific">Rickettsia peacockii (strain Rustic)</name>
    <dbReference type="NCBI Taxonomy" id="562019"/>
    <lineage>
        <taxon>Bacteria</taxon>
        <taxon>Pseudomonadati</taxon>
        <taxon>Pseudomonadota</taxon>
        <taxon>Alphaproteobacteria</taxon>
        <taxon>Rickettsiales</taxon>
        <taxon>Rickettsiaceae</taxon>
        <taxon>Rickettsieae</taxon>
        <taxon>Rickettsia</taxon>
        <taxon>spotted fever group</taxon>
    </lineage>
</organism>
<protein>
    <recommendedName>
        <fullName evidence="1">Large ribosomal subunit protein bL25</fullName>
    </recommendedName>
    <alternativeName>
        <fullName evidence="2">50S ribosomal protein L25</fullName>
    </alternativeName>
    <alternativeName>
        <fullName evidence="1">General stress protein CTC</fullName>
    </alternativeName>
</protein>
<sequence length="203" mass="22624">MSEILELEAESRTEFGTGAARALRRAGRVPAIIYGAGKTPVSISLEEKEITKYYRKPAFISQLINLTIDKKKYKVLPKAVELHPVTDIVRHVDFVFLEEKTQKMEVPVVYEGKERALGVKRGGYFNIVKRRVTLLCDVNNIPRNVTIDVTNMPMATSLKSSKIELPKGCSFVTKKEFVLATIIGRRGAKTEAEGEQQAAEAGK</sequence>
<proteinExistence type="inferred from homology"/>
<keyword id="KW-0687">Ribonucleoprotein</keyword>
<keyword id="KW-0689">Ribosomal protein</keyword>
<keyword id="KW-0694">RNA-binding</keyword>
<keyword id="KW-0699">rRNA-binding</keyword>
<evidence type="ECO:0000255" key="1">
    <source>
        <dbReference type="HAMAP-Rule" id="MF_01334"/>
    </source>
</evidence>
<evidence type="ECO:0000305" key="2"/>
<name>RL25_RICPU</name>
<gene>
    <name evidence="1" type="primary">rplY</name>
    <name evidence="1" type="synonym">ctc</name>
    <name type="ordered locus">RPR_03650</name>
</gene>
<feature type="chain" id="PRO_1000214658" description="Large ribosomal subunit protein bL25">
    <location>
        <begin position="1"/>
        <end position="203"/>
    </location>
</feature>
<dbReference type="EMBL" id="CP001227">
    <property type="protein sequence ID" value="ACR47464.1"/>
    <property type="molecule type" value="Genomic_DNA"/>
</dbReference>
<dbReference type="RefSeq" id="WP_012736701.1">
    <property type="nucleotide sequence ID" value="NC_012730.1"/>
</dbReference>
<dbReference type="SMR" id="C4K1L3"/>
<dbReference type="KEGG" id="rpk:RPR_03650"/>
<dbReference type="HOGENOM" id="CLU_075939_0_0_5"/>
<dbReference type="Proteomes" id="UP000005015">
    <property type="component" value="Chromosome"/>
</dbReference>
<dbReference type="GO" id="GO:0022625">
    <property type="term" value="C:cytosolic large ribosomal subunit"/>
    <property type="evidence" value="ECO:0007669"/>
    <property type="project" value="TreeGrafter"/>
</dbReference>
<dbReference type="GO" id="GO:0008097">
    <property type="term" value="F:5S rRNA binding"/>
    <property type="evidence" value="ECO:0007669"/>
    <property type="project" value="InterPro"/>
</dbReference>
<dbReference type="GO" id="GO:0003735">
    <property type="term" value="F:structural constituent of ribosome"/>
    <property type="evidence" value="ECO:0007669"/>
    <property type="project" value="InterPro"/>
</dbReference>
<dbReference type="GO" id="GO:0006412">
    <property type="term" value="P:translation"/>
    <property type="evidence" value="ECO:0007669"/>
    <property type="project" value="UniProtKB-UniRule"/>
</dbReference>
<dbReference type="CDD" id="cd00495">
    <property type="entry name" value="Ribosomal_L25_TL5_CTC"/>
    <property type="match status" value="1"/>
</dbReference>
<dbReference type="Gene3D" id="2.170.120.20">
    <property type="entry name" value="Ribosomal protein L25, beta domain"/>
    <property type="match status" value="1"/>
</dbReference>
<dbReference type="Gene3D" id="2.40.240.10">
    <property type="entry name" value="Ribosomal Protein L25, Chain P"/>
    <property type="match status" value="1"/>
</dbReference>
<dbReference type="HAMAP" id="MF_01336">
    <property type="entry name" value="Ribosomal_bL25"/>
    <property type="match status" value="1"/>
</dbReference>
<dbReference type="HAMAP" id="MF_01334">
    <property type="entry name" value="Ribosomal_bL25_CTC"/>
    <property type="match status" value="1"/>
</dbReference>
<dbReference type="InterPro" id="IPR020056">
    <property type="entry name" value="Rbsml_bL25/Gln-tRNA_synth_N"/>
</dbReference>
<dbReference type="InterPro" id="IPR011035">
    <property type="entry name" value="Ribosomal_bL25/Gln-tRNA_synth"/>
</dbReference>
<dbReference type="InterPro" id="IPR020057">
    <property type="entry name" value="Ribosomal_bL25_b-dom"/>
</dbReference>
<dbReference type="InterPro" id="IPR037121">
    <property type="entry name" value="Ribosomal_bL25_C"/>
</dbReference>
<dbReference type="InterPro" id="IPR001021">
    <property type="entry name" value="Ribosomal_bL25_long"/>
</dbReference>
<dbReference type="InterPro" id="IPR020055">
    <property type="entry name" value="Ribosomal_bL25_short"/>
</dbReference>
<dbReference type="InterPro" id="IPR029751">
    <property type="entry name" value="Ribosomal_L25_dom"/>
</dbReference>
<dbReference type="InterPro" id="IPR020930">
    <property type="entry name" value="Ribosomal_uL5_bac-type"/>
</dbReference>
<dbReference type="NCBIfam" id="TIGR00731">
    <property type="entry name" value="bL25_bact_ctc"/>
    <property type="match status" value="1"/>
</dbReference>
<dbReference type="NCBIfam" id="NF004128">
    <property type="entry name" value="PRK05618.1-2"/>
    <property type="match status" value="1"/>
</dbReference>
<dbReference type="NCBIfam" id="NF004612">
    <property type="entry name" value="PRK05943.1"/>
    <property type="match status" value="1"/>
</dbReference>
<dbReference type="PANTHER" id="PTHR33284">
    <property type="entry name" value="RIBOSOMAL PROTEIN L25/GLN-TRNA SYNTHETASE, ANTI-CODON-BINDING DOMAIN-CONTAINING PROTEIN"/>
    <property type="match status" value="1"/>
</dbReference>
<dbReference type="PANTHER" id="PTHR33284:SF1">
    <property type="entry name" value="RIBOSOMAL PROTEIN L25_GLN-TRNA SYNTHETASE, ANTI-CODON-BINDING DOMAIN-CONTAINING PROTEIN"/>
    <property type="match status" value="1"/>
</dbReference>
<dbReference type="Pfam" id="PF01386">
    <property type="entry name" value="Ribosomal_L25p"/>
    <property type="match status" value="1"/>
</dbReference>
<dbReference type="Pfam" id="PF14693">
    <property type="entry name" value="Ribosomal_TL5_C"/>
    <property type="match status" value="1"/>
</dbReference>
<dbReference type="SUPFAM" id="SSF50715">
    <property type="entry name" value="Ribosomal protein L25-like"/>
    <property type="match status" value="1"/>
</dbReference>